<organism>
    <name type="scientific">Campylobacter jejuni subsp. jejuni serotype O:2 (strain ATCC 700819 / NCTC 11168)</name>
    <dbReference type="NCBI Taxonomy" id="192222"/>
    <lineage>
        <taxon>Bacteria</taxon>
        <taxon>Pseudomonadati</taxon>
        <taxon>Campylobacterota</taxon>
        <taxon>Epsilonproteobacteria</taxon>
        <taxon>Campylobacterales</taxon>
        <taxon>Campylobacteraceae</taxon>
        <taxon>Campylobacter</taxon>
    </lineage>
</organism>
<evidence type="ECO:0000250" key="1"/>
<evidence type="ECO:0000305" key="2"/>
<proteinExistence type="inferred from homology"/>
<sequence length="339" mass="37925">MKFVSVEQAIKDLQAGKMLVMVDAEDRENEGDLIFPAQFSTQEKVNFMIKEARGVVCVALDETLAKKFELPLMVPKNTSNHETAFTITVDAKDATTGVSAYERNMTIQIFADDNAKASDFVRPGHINPLIAKKGGVLERTGHTEGTVDLCKLAGLKGACVICEIVKDNGDMARREDLEIFCQKHDLNMIAVSDLIEYRLKHESLIKLEEKSQSVLAGFKAEKFIFSDHNQTQHIAFCFKDIKKCENVKFHISGSDFELLTSDKFSKLLEQIKFLSENGGVIVFMQGEKSSTTQYKNYGIGAQILRYFGIEEIKLLSQSCDKDYIGLEGFGLNLKACNFN</sequence>
<dbReference type="EC" id="4.1.99.12"/>
<dbReference type="EMBL" id="AL111168">
    <property type="protein sequence ID" value="CAL34718.1"/>
    <property type="molecule type" value="Genomic_DNA"/>
</dbReference>
<dbReference type="PIR" id="C81404">
    <property type="entry name" value="C81404"/>
</dbReference>
<dbReference type="RefSeq" id="WP_002852104.1">
    <property type="nucleotide sequence ID" value="NZ_SZUC01000002.1"/>
</dbReference>
<dbReference type="SMR" id="Q9PHU4"/>
<dbReference type="IntAct" id="Q9PHU4">
    <property type="interactions" value="68"/>
</dbReference>
<dbReference type="STRING" id="192222.Cj0572"/>
<dbReference type="PaxDb" id="192222-Cj0572"/>
<dbReference type="EnsemblBacteria" id="CAL34718">
    <property type="protein sequence ID" value="CAL34718"/>
    <property type="gene ID" value="Cj0572"/>
</dbReference>
<dbReference type="KEGG" id="cje:Cj0572"/>
<dbReference type="PATRIC" id="fig|192222.6.peg.564"/>
<dbReference type="eggNOG" id="COG0108">
    <property type="taxonomic scope" value="Bacteria"/>
</dbReference>
<dbReference type="eggNOG" id="COG0807">
    <property type="taxonomic scope" value="Bacteria"/>
</dbReference>
<dbReference type="HOGENOM" id="CLU_020273_1_2_7"/>
<dbReference type="OrthoDB" id="9793111at2"/>
<dbReference type="UniPathway" id="UPA00275">
    <property type="reaction ID" value="UER00399"/>
</dbReference>
<dbReference type="Proteomes" id="UP000000799">
    <property type="component" value="Chromosome"/>
</dbReference>
<dbReference type="GO" id="GO:0005829">
    <property type="term" value="C:cytosol"/>
    <property type="evidence" value="ECO:0007669"/>
    <property type="project" value="TreeGrafter"/>
</dbReference>
<dbReference type="GO" id="GO:0008686">
    <property type="term" value="F:3,4-dihydroxy-2-butanone-4-phosphate synthase activity"/>
    <property type="evidence" value="ECO:0007669"/>
    <property type="project" value="UniProtKB-UniRule"/>
</dbReference>
<dbReference type="GO" id="GO:0003935">
    <property type="term" value="F:GTP cyclohydrolase II activity"/>
    <property type="evidence" value="ECO:0007669"/>
    <property type="project" value="TreeGrafter"/>
</dbReference>
<dbReference type="GO" id="GO:0000287">
    <property type="term" value="F:magnesium ion binding"/>
    <property type="evidence" value="ECO:0007669"/>
    <property type="project" value="UniProtKB-UniRule"/>
</dbReference>
<dbReference type="GO" id="GO:0030145">
    <property type="term" value="F:manganese ion binding"/>
    <property type="evidence" value="ECO:0007669"/>
    <property type="project" value="UniProtKB-UniRule"/>
</dbReference>
<dbReference type="GO" id="GO:0009231">
    <property type="term" value="P:riboflavin biosynthetic process"/>
    <property type="evidence" value="ECO:0007669"/>
    <property type="project" value="UniProtKB-UniRule"/>
</dbReference>
<dbReference type="FunFam" id="3.90.870.10:FF:000001">
    <property type="entry name" value="Riboflavin biosynthesis protein RibBA"/>
    <property type="match status" value="1"/>
</dbReference>
<dbReference type="Gene3D" id="3.90.870.10">
    <property type="entry name" value="DHBP synthase"/>
    <property type="match status" value="1"/>
</dbReference>
<dbReference type="Gene3D" id="3.40.50.10990">
    <property type="entry name" value="GTP cyclohydrolase II"/>
    <property type="match status" value="1"/>
</dbReference>
<dbReference type="HAMAP" id="MF_00180">
    <property type="entry name" value="RibB"/>
    <property type="match status" value="1"/>
</dbReference>
<dbReference type="InterPro" id="IPR017945">
    <property type="entry name" value="DHBP_synth_RibB-like_a/b_dom"/>
</dbReference>
<dbReference type="InterPro" id="IPR000422">
    <property type="entry name" value="DHBP_synthase_RibB"/>
</dbReference>
<dbReference type="InterPro" id="IPR032677">
    <property type="entry name" value="GTP_cyclohydro_II"/>
</dbReference>
<dbReference type="InterPro" id="IPR036144">
    <property type="entry name" value="RibA-like_sf"/>
</dbReference>
<dbReference type="NCBIfam" id="NF006804">
    <property type="entry name" value="PRK09314.1"/>
    <property type="match status" value="1"/>
</dbReference>
<dbReference type="NCBIfam" id="TIGR00506">
    <property type="entry name" value="ribB"/>
    <property type="match status" value="1"/>
</dbReference>
<dbReference type="PANTHER" id="PTHR21327:SF18">
    <property type="entry name" value="3,4-DIHYDROXY-2-BUTANONE 4-PHOSPHATE SYNTHASE"/>
    <property type="match status" value="1"/>
</dbReference>
<dbReference type="PANTHER" id="PTHR21327">
    <property type="entry name" value="GTP CYCLOHYDROLASE II-RELATED"/>
    <property type="match status" value="1"/>
</dbReference>
<dbReference type="Pfam" id="PF00926">
    <property type="entry name" value="DHBP_synthase"/>
    <property type="match status" value="1"/>
</dbReference>
<dbReference type="Pfam" id="PF00925">
    <property type="entry name" value="GTP_cyclohydro2"/>
    <property type="match status" value="1"/>
</dbReference>
<dbReference type="PIRSF" id="PIRSF001259">
    <property type="entry name" value="RibA"/>
    <property type="match status" value="1"/>
</dbReference>
<dbReference type="SUPFAM" id="SSF142695">
    <property type="entry name" value="RibA-like"/>
    <property type="match status" value="1"/>
</dbReference>
<dbReference type="SUPFAM" id="SSF55821">
    <property type="entry name" value="YrdC/RibB"/>
    <property type="match status" value="1"/>
</dbReference>
<name>RIBB_CAMJE</name>
<feature type="chain" id="PRO_0000151722" description="3,4-dihydroxy-2-butanone 4-phosphate synthase">
    <location>
        <begin position="1"/>
        <end position="339"/>
    </location>
</feature>
<feature type="region of interest" description="DHBP synthase">
    <location>
        <begin position="1"/>
        <end position="206"/>
    </location>
</feature>
<feature type="region of interest" description="GTP cyclohydrolase II-like">
    <location>
        <begin position="207"/>
        <end position="339"/>
    </location>
</feature>
<feature type="binding site" evidence="1">
    <location>
        <begin position="27"/>
        <end position="28"/>
    </location>
    <ligand>
        <name>D-ribulose 5-phosphate</name>
        <dbReference type="ChEBI" id="CHEBI:58121"/>
    </ligand>
</feature>
<feature type="binding site" evidence="1">
    <location>
        <position position="28"/>
    </location>
    <ligand>
        <name>Mg(2+)</name>
        <dbReference type="ChEBI" id="CHEBI:18420"/>
        <label>1</label>
    </ligand>
</feature>
<feature type="binding site" evidence="1">
    <location>
        <position position="28"/>
    </location>
    <ligand>
        <name>Mg(2+)</name>
        <dbReference type="ChEBI" id="CHEBI:18420"/>
        <label>2</label>
    </ligand>
</feature>
<feature type="binding site" evidence="1">
    <location>
        <position position="32"/>
    </location>
    <ligand>
        <name>D-ribulose 5-phosphate</name>
        <dbReference type="ChEBI" id="CHEBI:58121"/>
    </ligand>
</feature>
<feature type="binding site" evidence="1">
    <location>
        <begin position="139"/>
        <end position="143"/>
    </location>
    <ligand>
        <name>D-ribulose 5-phosphate</name>
        <dbReference type="ChEBI" id="CHEBI:58121"/>
    </ligand>
</feature>
<feature type="binding site" evidence="1">
    <location>
        <position position="142"/>
    </location>
    <ligand>
        <name>Mg(2+)</name>
        <dbReference type="ChEBI" id="CHEBI:18420"/>
        <label>2</label>
    </ligand>
</feature>
<feature type="binding site" evidence="1">
    <location>
        <position position="163"/>
    </location>
    <ligand>
        <name>D-ribulose 5-phosphate</name>
        <dbReference type="ChEBI" id="CHEBI:58121"/>
    </ligand>
</feature>
<feature type="site" description="Essential for catalytic activity" evidence="1">
    <location>
        <position position="125"/>
    </location>
</feature>
<feature type="site" description="Essential for catalytic activity" evidence="1">
    <location>
        <position position="163"/>
    </location>
</feature>
<accession>Q9PHU4</accession>
<accession>Q0PAU5</accession>
<keyword id="KW-0456">Lyase</keyword>
<keyword id="KW-0460">Magnesium</keyword>
<keyword id="KW-0464">Manganese</keyword>
<keyword id="KW-0479">Metal-binding</keyword>
<keyword id="KW-1185">Reference proteome</keyword>
<keyword id="KW-0686">Riboflavin biosynthesis</keyword>
<reference key="1">
    <citation type="journal article" date="2000" name="Nature">
        <title>The genome sequence of the food-borne pathogen Campylobacter jejuni reveals hypervariable sequences.</title>
        <authorList>
            <person name="Parkhill J."/>
            <person name="Wren B.W."/>
            <person name="Mungall K.L."/>
            <person name="Ketley J.M."/>
            <person name="Churcher C.M."/>
            <person name="Basham D."/>
            <person name="Chillingworth T."/>
            <person name="Davies R.M."/>
            <person name="Feltwell T."/>
            <person name="Holroyd S."/>
            <person name="Jagels K."/>
            <person name="Karlyshev A.V."/>
            <person name="Moule S."/>
            <person name="Pallen M.J."/>
            <person name="Penn C.W."/>
            <person name="Quail M.A."/>
            <person name="Rajandream M.A."/>
            <person name="Rutherford K.M."/>
            <person name="van Vliet A.H.M."/>
            <person name="Whitehead S."/>
            <person name="Barrell B.G."/>
        </authorList>
    </citation>
    <scope>NUCLEOTIDE SEQUENCE [LARGE SCALE GENOMIC DNA]</scope>
    <source>
        <strain>ATCC 700819 / NCTC 11168</strain>
    </source>
</reference>
<comment type="function">
    <text evidence="1">Catalyzes the conversion of D-ribulose 5-phosphate to formate and 3,4-dihydroxy-2-butanone 4-phosphate.</text>
</comment>
<comment type="catalytic activity">
    <reaction>
        <text>D-ribulose 5-phosphate = (2S)-2-hydroxy-3-oxobutyl phosphate + formate + H(+)</text>
        <dbReference type="Rhea" id="RHEA:18457"/>
        <dbReference type="ChEBI" id="CHEBI:15378"/>
        <dbReference type="ChEBI" id="CHEBI:15740"/>
        <dbReference type="ChEBI" id="CHEBI:58121"/>
        <dbReference type="ChEBI" id="CHEBI:58830"/>
        <dbReference type="EC" id="4.1.99.12"/>
    </reaction>
</comment>
<comment type="cofactor">
    <cofactor evidence="1">
        <name>Mg(2+)</name>
        <dbReference type="ChEBI" id="CHEBI:18420"/>
    </cofactor>
    <cofactor evidence="1">
        <name>Mn(2+)</name>
        <dbReference type="ChEBI" id="CHEBI:29035"/>
    </cofactor>
    <text evidence="1">Binds 2 divalent metal cations per subunit. Magnesium or manganese.</text>
</comment>
<comment type="pathway">
    <text>Cofactor biosynthesis; riboflavin biosynthesis; 2-hydroxy-3-oxobutyl phosphate from D-ribulose 5-phosphate: step 1/1.</text>
</comment>
<comment type="similarity">
    <text evidence="2">In the N-terminal section; belongs to the DHBP synthase family.</text>
</comment>
<comment type="similarity">
    <text evidence="2">In the C-terminal section; belongs to the GTP cyclohydrolase II family.</text>
</comment>
<protein>
    <recommendedName>
        <fullName>3,4-dihydroxy-2-butanone 4-phosphate synthase</fullName>
        <shortName>DHBP synthase</shortName>
        <ecNumber>4.1.99.12</ecNumber>
    </recommendedName>
</protein>
<gene>
    <name type="primary">ribB</name>
    <name type="ordered locus">Cj0572</name>
</gene>